<gene>
    <name evidence="1" type="primary">thiG</name>
    <name type="ordered locus">Gbem_0653</name>
</gene>
<accession>B5ED95</accession>
<organism>
    <name type="scientific">Citrifermentans bemidjiense (strain ATCC BAA-1014 / DSM 16622 / JCM 12645 / Bem)</name>
    <name type="common">Geobacter bemidjiensis</name>
    <dbReference type="NCBI Taxonomy" id="404380"/>
    <lineage>
        <taxon>Bacteria</taxon>
        <taxon>Pseudomonadati</taxon>
        <taxon>Thermodesulfobacteriota</taxon>
        <taxon>Desulfuromonadia</taxon>
        <taxon>Geobacterales</taxon>
        <taxon>Geobacteraceae</taxon>
        <taxon>Citrifermentans</taxon>
    </lineage>
</organism>
<dbReference type="EC" id="2.8.1.10" evidence="1"/>
<dbReference type="EMBL" id="CP001124">
    <property type="protein sequence ID" value="ACH37681.1"/>
    <property type="molecule type" value="Genomic_DNA"/>
</dbReference>
<dbReference type="RefSeq" id="WP_012529089.1">
    <property type="nucleotide sequence ID" value="NC_011146.1"/>
</dbReference>
<dbReference type="SMR" id="B5ED95"/>
<dbReference type="STRING" id="404380.Gbem_0653"/>
<dbReference type="KEGG" id="gbm:Gbem_0653"/>
<dbReference type="eggNOG" id="COG2022">
    <property type="taxonomic scope" value="Bacteria"/>
</dbReference>
<dbReference type="HOGENOM" id="CLU_062233_1_0_7"/>
<dbReference type="OrthoDB" id="9805935at2"/>
<dbReference type="UniPathway" id="UPA00060"/>
<dbReference type="Proteomes" id="UP000008825">
    <property type="component" value="Chromosome"/>
</dbReference>
<dbReference type="GO" id="GO:0005737">
    <property type="term" value="C:cytoplasm"/>
    <property type="evidence" value="ECO:0007669"/>
    <property type="project" value="UniProtKB-SubCell"/>
</dbReference>
<dbReference type="GO" id="GO:1990107">
    <property type="term" value="F:thiazole synthase activity"/>
    <property type="evidence" value="ECO:0007669"/>
    <property type="project" value="UniProtKB-EC"/>
</dbReference>
<dbReference type="GO" id="GO:0009229">
    <property type="term" value="P:thiamine diphosphate biosynthetic process"/>
    <property type="evidence" value="ECO:0007669"/>
    <property type="project" value="UniProtKB-UniRule"/>
</dbReference>
<dbReference type="CDD" id="cd04728">
    <property type="entry name" value="ThiG"/>
    <property type="match status" value="1"/>
</dbReference>
<dbReference type="FunFam" id="3.20.20.70:FF:000049">
    <property type="entry name" value="Thiazole synthase"/>
    <property type="match status" value="1"/>
</dbReference>
<dbReference type="Gene3D" id="3.20.20.70">
    <property type="entry name" value="Aldolase class I"/>
    <property type="match status" value="1"/>
</dbReference>
<dbReference type="HAMAP" id="MF_00443">
    <property type="entry name" value="ThiG"/>
    <property type="match status" value="1"/>
</dbReference>
<dbReference type="InterPro" id="IPR013785">
    <property type="entry name" value="Aldolase_TIM"/>
</dbReference>
<dbReference type="InterPro" id="IPR033983">
    <property type="entry name" value="Thiazole_synthase_ThiG"/>
</dbReference>
<dbReference type="InterPro" id="IPR008867">
    <property type="entry name" value="ThiG"/>
</dbReference>
<dbReference type="PANTHER" id="PTHR34266">
    <property type="entry name" value="THIAZOLE SYNTHASE"/>
    <property type="match status" value="1"/>
</dbReference>
<dbReference type="PANTHER" id="PTHR34266:SF2">
    <property type="entry name" value="THIAZOLE SYNTHASE"/>
    <property type="match status" value="1"/>
</dbReference>
<dbReference type="Pfam" id="PF05690">
    <property type="entry name" value="ThiG"/>
    <property type="match status" value="1"/>
</dbReference>
<dbReference type="SUPFAM" id="SSF110399">
    <property type="entry name" value="ThiG-like"/>
    <property type="match status" value="1"/>
</dbReference>
<comment type="function">
    <text evidence="1">Catalyzes the rearrangement of 1-deoxy-D-xylulose 5-phosphate (DXP) to produce the thiazole phosphate moiety of thiamine. Sulfur is provided by the thiocarboxylate moiety of the carrier protein ThiS. In vitro, sulfur can be provided by H(2)S.</text>
</comment>
<comment type="catalytic activity">
    <reaction evidence="1">
        <text>[ThiS sulfur-carrier protein]-C-terminal-Gly-aminoethanethioate + 2-iminoacetate + 1-deoxy-D-xylulose 5-phosphate = [ThiS sulfur-carrier protein]-C-terminal Gly-Gly + 2-[(2R,5Z)-2-carboxy-4-methylthiazol-5(2H)-ylidene]ethyl phosphate + 2 H2O + H(+)</text>
        <dbReference type="Rhea" id="RHEA:26297"/>
        <dbReference type="Rhea" id="RHEA-COMP:12909"/>
        <dbReference type="Rhea" id="RHEA-COMP:19908"/>
        <dbReference type="ChEBI" id="CHEBI:15377"/>
        <dbReference type="ChEBI" id="CHEBI:15378"/>
        <dbReference type="ChEBI" id="CHEBI:57792"/>
        <dbReference type="ChEBI" id="CHEBI:62899"/>
        <dbReference type="ChEBI" id="CHEBI:77846"/>
        <dbReference type="ChEBI" id="CHEBI:90778"/>
        <dbReference type="ChEBI" id="CHEBI:232372"/>
        <dbReference type="EC" id="2.8.1.10"/>
    </reaction>
</comment>
<comment type="pathway">
    <text evidence="1">Cofactor biosynthesis; thiamine diphosphate biosynthesis.</text>
</comment>
<comment type="subunit">
    <text evidence="1">Homotetramer. Forms heterodimers with either ThiH or ThiS.</text>
</comment>
<comment type="subcellular location">
    <subcellularLocation>
        <location evidence="1">Cytoplasm</location>
    </subcellularLocation>
</comment>
<comment type="similarity">
    <text evidence="1">Belongs to the ThiG family.</text>
</comment>
<name>THIG_CITBB</name>
<feature type="chain" id="PRO_1000196867" description="Thiazole synthase">
    <location>
        <begin position="1"/>
        <end position="260"/>
    </location>
</feature>
<feature type="active site" description="Schiff-base intermediate with DXP" evidence="1">
    <location>
        <position position="102"/>
    </location>
</feature>
<feature type="binding site" evidence="1">
    <location>
        <position position="163"/>
    </location>
    <ligand>
        <name>1-deoxy-D-xylulose 5-phosphate</name>
        <dbReference type="ChEBI" id="CHEBI:57792"/>
    </ligand>
</feature>
<feature type="binding site" evidence="1">
    <location>
        <begin position="189"/>
        <end position="190"/>
    </location>
    <ligand>
        <name>1-deoxy-D-xylulose 5-phosphate</name>
        <dbReference type="ChEBI" id="CHEBI:57792"/>
    </ligand>
</feature>
<feature type="binding site" evidence="1">
    <location>
        <begin position="211"/>
        <end position="212"/>
    </location>
    <ligand>
        <name>1-deoxy-D-xylulose 5-phosphate</name>
        <dbReference type="ChEBI" id="CHEBI:57792"/>
    </ligand>
</feature>
<keyword id="KW-0963">Cytoplasm</keyword>
<keyword id="KW-1185">Reference proteome</keyword>
<keyword id="KW-0704">Schiff base</keyword>
<keyword id="KW-0784">Thiamine biosynthesis</keyword>
<keyword id="KW-0808">Transferase</keyword>
<evidence type="ECO:0000255" key="1">
    <source>
        <dbReference type="HAMAP-Rule" id="MF_00443"/>
    </source>
</evidence>
<protein>
    <recommendedName>
        <fullName evidence="1">Thiazole synthase</fullName>
        <ecNumber evidence="1">2.8.1.10</ecNumber>
    </recommendedName>
</protein>
<sequence length="260" mass="27656">MTQTNDKLVIAGREFDSRLMVGTGKYADFQQMVRAIEVSGAQIITVAVRRVNISDRSKESLLDHIDLKKYTLLPNTAGCYTAEDAIRTCRLAREAGLSDFVKLEVLGDEKTLYPNNEELLKAAKVLLAEGFTVLPYTSDDPIICKKLEDMGCAAVMPLGAPIGSGLGIRNPYNIQIILESVKVPVIVDAGVGTASDAAIAMELGCHGVLMNTAIAGAKDPVAMAEAMNCAVRAGRLAYLAGRIPRKLYASASSPLAGLIG</sequence>
<reference key="1">
    <citation type="submission" date="2008-07" db="EMBL/GenBank/DDBJ databases">
        <title>Complete sequence of Geobacter bemidjiensis BEM.</title>
        <authorList>
            <consortium name="US DOE Joint Genome Institute"/>
            <person name="Lucas S."/>
            <person name="Copeland A."/>
            <person name="Lapidus A."/>
            <person name="Glavina del Rio T."/>
            <person name="Dalin E."/>
            <person name="Tice H."/>
            <person name="Bruce D."/>
            <person name="Goodwin L."/>
            <person name="Pitluck S."/>
            <person name="Kiss H."/>
            <person name="Brettin T."/>
            <person name="Detter J.C."/>
            <person name="Han C."/>
            <person name="Kuske C.R."/>
            <person name="Schmutz J."/>
            <person name="Larimer F."/>
            <person name="Land M."/>
            <person name="Hauser L."/>
            <person name="Kyrpides N."/>
            <person name="Lykidis A."/>
            <person name="Lovley D."/>
            <person name="Richardson P."/>
        </authorList>
    </citation>
    <scope>NUCLEOTIDE SEQUENCE [LARGE SCALE GENOMIC DNA]</scope>
    <source>
        <strain>ATCC BAA-1014 / DSM 16622 / JCM 12645 / Bem</strain>
    </source>
</reference>
<proteinExistence type="inferred from homology"/>